<name>TYSY_BARHE</name>
<organism>
    <name type="scientific">Bartonella henselae (strain ATCC 49882 / DSM 28221 / CCUG 30454 / Houston 1)</name>
    <name type="common">Rochalimaea henselae</name>
    <dbReference type="NCBI Taxonomy" id="283166"/>
    <lineage>
        <taxon>Bacteria</taxon>
        <taxon>Pseudomonadati</taxon>
        <taxon>Pseudomonadota</taxon>
        <taxon>Alphaproteobacteria</taxon>
        <taxon>Hyphomicrobiales</taxon>
        <taxon>Bartonellaceae</taxon>
        <taxon>Bartonella</taxon>
    </lineage>
</organism>
<reference key="1">
    <citation type="journal article" date="2004" name="Proc. Natl. Acad. Sci. U.S.A.">
        <title>The louse-borne human pathogen Bartonella quintana is a genomic derivative of the zoonotic agent Bartonella henselae.</title>
        <authorList>
            <person name="Alsmark U.C.M."/>
            <person name="Frank A.C."/>
            <person name="Karlberg E.O."/>
            <person name="Legault B.-A."/>
            <person name="Ardell D.H."/>
            <person name="Canbaeck B."/>
            <person name="Eriksson A.-S."/>
            <person name="Naeslund A.K."/>
            <person name="Handley S.A."/>
            <person name="Huvet M."/>
            <person name="La Scola B."/>
            <person name="Holmberg M."/>
            <person name="Andersson S.G.E."/>
        </authorList>
    </citation>
    <scope>NUCLEOTIDE SEQUENCE [LARGE SCALE GENOMIC DNA]</scope>
    <source>
        <strain>ATCC 49882 / DSM 28221 / CCUG 30454 / Houston 1</strain>
    </source>
</reference>
<sequence>MKTYLDLLSHVLNKGIDRTDRTGVGTRSVFGYQMRFDLQAGFPLLTTKKLHLRSIIYELLWFLRGDTNIAWLKEHGVSIWDEWADEKGNLGPIYGYQWRSWPAPDGRHIDQISNLLMMIKKTPDSRRLIVSAWNPASIKEMALPPCHCFFQFYVADGKLSCQLYQRSADIFLGIPFNIASYALLTMMIAQVSGLKVGDFIHTLGDAHLYSNHFEQAQHQLSRIPNALPFMRINPAVTDLFSFKFEDFELLNYDAQPHIKAPIAV</sequence>
<proteinExistence type="inferred from homology"/>
<gene>
    <name evidence="1" type="primary">thyA</name>
    <name type="ordered locus">BH10980</name>
</gene>
<keyword id="KW-0963">Cytoplasm</keyword>
<keyword id="KW-0489">Methyltransferase</keyword>
<keyword id="KW-0545">Nucleotide biosynthesis</keyword>
<keyword id="KW-0808">Transferase</keyword>
<evidence type="ECO:0000255" key="1">
    <source>
        <dbReference type="HAMAP-Rule" id="MF_00008"/>
    </source>
</evidence>
<feature type="chain" id="PRO_0000140934" description="Thymidylate synthase">
    <location>
        <begin position="1"/>
        <end position="264"/>
    </location>
</feature>
<feature type="active site" description="Nucleophile" evidence="1">
    <location>
        <position position="146"/>
    </location>
</feature>
<feature type="binding site" description="in other chain" evidence="1">
    <location>
        <position position="21"/>
    </location>
    <ligand>
        <name>dUMP</name>
        <dbReference type="ChEBI" id="CHEBI:246422"/>
        <note>ligand shared between dimeric partners</note>
    </ligand>
</feature>
<feature type="binding site" evidence="1">
    <location>
        <position position="51"/>
    </location>
    <ligand>
        <name>(6R)-5,10-methylene-5,6,7,8-tetrahydrofolate</name>
        <dbReference type="ChEBI" id="CHEBI:15636"/>
    </ligand>
</feature>
<feature type="binding site" evidence="1">
    <location>
        <begin position="126"/>
        <end position="127"/>
    </location>
    <ligand>
        <name>dUMP</name>
        <dbReference type="ChEBI" id="CHEBI:246422"/>
        <note>ligand shared between dimeric partners</note>
    </ligand>
</feature>
<feature type="binding site" description="in other chain" evidence="1">
    <location>
        <begin position="166"/>
        <end position="169"/>
    </location>
    <ligand>
        <name>dUMP</name>
        <dbReference type="ChEBI" id="CHEBI:246422"/>
        <note>ligand shared between dimeric partners</note>
    </ligand>
</feature>
<feature type="binding site" evidence="1">
    <location>
        <position position="169"/>
    </location>
    <ligand>
        <name>(6R)-5,10-methylene-5,6,7,8-tetrahydrofolate</name>
        <dbReference type="ChEBI" id="CHEBI:15636"/>
    </ligand>
</feature>
<feature type="binding site" description="in other chain" evidence="1">
    <location>
        <position position="177"/>
    </location>
    <ligand>
        <name>dUMP</name>
        <dbReference type="ChEBI" id="CHEBI:246422"/>
        <note>ligand shared between dimeric partners</note>
    </ligand>
</feature>
<feature type="binding site" description="in other chain" evidence="1">
    <location>
        <begin position="207"/>
        <end position="209"/>
    </location>
    <ligand>
        <name>dUMP</name>
        <dbReference type="ChEBI" id="CHEBI:246422"/>
        <note>ligand shared between dimeric partners</note>
    </ligand>
</feature>
<feature type="binding site" evidence="1">
    <location>
        <position position="263"/>
    </location>
    <ligand>
        <name>(6R)-5,10-methylene-5,6,7,8-tetrahydrofolate</name>
        <dbReference type="ChEBI" id="CHEBI:15636"/>
    </ligand>
</feature>
<protein>
    <recommendedName>
        <fullName evidence="1">Thymidylate synthase</fullName>
        <shortName evidence="1">TS</shortName>
        <shortName evidence="1">TSase</shortName>
        <ecNumber evidence="1">2.1.1.45</ecNumber>
    </recommendedName>
</protein>
<dbReference type="EC" id="2.1.1.45" evidence="1"/>
<dbReference type="EMBL" id="BX897699">
    <property type="protein sequence ID" value="CAF27884.1"/>
    <property type="molecule type" value="Genomic_DNA"/>
</dbReference>
<dbReference type="RefSeq" id="WP_011180949.1">
    <property type="nucleotide sequence ID" value="NZ_LRIJ02000001.1"/>
</dbReference>
<dbReference type="SMR" id="Q6G2S8"/>
<dbReference type="PaxDb" id="283166-BH10980"/>
<dbReference type="EnsemblBacteria" id="CAF27884">
    <property type="protein sequence ID" value="CAF27884"/>
    <property type="gene ID" value="BH10980"/>
</dbReference>
<dbReference type="KEGG" id="bhe:BH10980"/>
<dbReference type="eggNOG" id="COG0207">
    <property type="taxonomic scope" value="Bacteria"/>
</dbReference>
<dbReference type="OrthoDB" id="9774633at2"/>
<dbReference type="UniPathway" id="UPA00575"/>
<dbReference type="Proteomes" id="UP000000421">
    <property type="component" value="Chromosome"/>
</dbReference>
<dbReference type="GO" id="GO:0005829">
    <property type="term" value="C:cytosol"/>
    <property type="evidence" value="ECO:0007669"/>
    <property type="project" value="TreeGrafter"/>
</dbReference>
<dbReference type="GO" id="GO:0004799">
    <property type="term" value="F:thymidylate synthase activity"/>
    <property type="evidence" value="ECO:0007669"/>
    <property type="project" value="UniProtKB-UniRule"/>
</dbReference>
<dbReference type="GO" id="GO:0006231">
    <property type="term" value="P:dTMP biosynthetic process"/>
    <property type="evidence" value="ECO:0007669"/>
    <property type="project" value="UniProtKB-UniRule"/>
</dbReference>
<dbReference type="GO" id="GO:0006235">
    <property type="term" value="P:dTTP biosynthetic process"/>
    <property type="evidence" value="ECO:0007669"/>
    <property type="project" value="UniProtKB-UniRule"/>
</dbReference>
<dbReference type="GO" id="GO:0032259">
    <property type="term" value="P:methylation"/>
    <property type="evidence" value="ECO:0007669"/>
    <property type="project" value="UniProtKB-KW"/>
</dbReference>
<dbReference type="CDD" id="cd00351">
    <property type="entry name" value="TS_Pyrimidine_HMase"/>
    <property type="match status" value="1"/>
</dbReference>
<dbReference type="FunFam" id="3.30.572.10:FF:000001">
    <property type="entry name" value="Thymidylate synthase"/>
    <property type="match status" value="1"/>
</dbReference>
<dbReference type="Gene3D" id="3.30.572.10">
    <property type="entry name" value="Thymidylate synthase/dCMP hydroxymethylase domain"/>
    <property type="match status" value="1"/>
</dbReference>
<dbReference type="HAMAP" id="MF_00008">
    <property type="entry name" value="Thymidy_synth_bact"/>
    <property type="match status" value="1"/>
</dbReference>
<dbReference type="InterPro" id="IPR045097">
    <property type="entry name" value="Thymidate_synth/dCMP_Mease"/>
</dbReference>
<dbReference type="InterPro" id="IPR023451">
    <property type="entry name" value="Thymidate_synth/dCMP_Mease_dom"/>
</dbReference>
<dbReference type="InterPro" id="IPR036926">
    <property type="entry name" value="Thymidate_synth/dCMP_Mease_sf"/>
</dbReference>
<dbReference type="InterPro" id="IPR000398">
    <property type="entry name" value="Thymidylate_synthase"/>
</dbReference>
<dbReference type="InterPro" id="IPR020940">
    <property type="entry name" value="Thymidylate_synthase_AS"/>
</dbReference>
<dbReference type="NCBIfam" id="NF002497">
    <property type="entry name" value="PRK01827.1-3"/>
    <property type="match status" value="1"/>
</dbReference>
<dbReference type="NCBIfam" id="NF002499">
    <property type="entry name" value="PRK01827.1-5"/>
    <property type="match status" value="1"/>
</dbReference>
<dbReference type="NCBIfam" id="TIGR03284">
    <property type="entry name" value="thym_sym"/>
    <property type="match status" value="2"/>
</dbReference>
<dbReference type="PANTHER" id="PTHR11548:SF9">
    <property type="entry name" value="THYMIDYLATE SYNTHASE"/>
    <property type="match status" value="1"/>
</dbReference>
<dbReference type="PANTHER" id="PTHR11548">
    <property type="entry name" value="THYMIDYLATE SYNTHASE 1"/>
    <property type="match status" value="1"/>
</dbReference>
<dbReference type="Pfam" id="PF00303">
    <property type="entry name" value="Thymidylat_synt"/>
    <property type="match status" value="1"/>
</dbReference>
<dbReference type="PRINTS" id="PR00108">
    <property type="entry name" value="THYMDSNTHASE"/>
</dbReference>
<dbReference type="SUPFAM" id="SSF55831">
    <property type="entry name" value="Thymidylate synthase/dCMP hydroxymethylase"/>
    <property type="match status" value="1"/>
</dbReference>
<dbReference type="PROSITE" id="PS00091">
    <property type="entry name" value="THYMIDYLATE_SYNTHASE"/>
    <property type="match status" value="1"/>
</dbReference>
<comment type="function">
    <text evidence="1">Catalyzes the reductive methylation of 2'-deoxyuridine-5'-monophosphate (dUMP) to 2'-deoxythymidine-5'-monophosphate (dTMP) while utilizing 5,10-methylenetetrahydrofolate (mTHF) as the methyl donor and reductant in the reaction, yielding dihydrofolate (DHF) as a by-product. This enzymatic reaction provides an intracellular de novo source of dTMP, an essential precursor for DNA biosynthesis.</text>
</comment>
<comment type="catalytic activity">
    <reaction evidence="1">
        <text>dUMP + (6R)-5,10-methylene-5,6,7,8-tetrahydrofolate = 7,8-dihydrofolate + dTMP</text>
        <dbReference type="Rhea" id="RHEA:12104"/>
        <dbReference type="ChEBI" id="CHEBI:15636"/>
        <dbReference type="ChEBI" id="CHEBI:57451"/>
        <dbReference type="ChEBI" id="CHEBI:63528"/>
        <dbReference type="ChEBI" id="CHEBI:246422"/>
        <dbReference type="EC" id="2.1.1.45"/>
    </reaction>
</comment>
<comment type="pathway">
    <text evidence="1">Pyrimidine metabolism; dTTP biosynthesis.</text>
</comment>
<comment type="subunit">
    <text evidence="1">Homodimer.</text>
</comment>
<comment type="subcellular location">
    <subcellularLocation>
        <location evidence="1">Cytoplasm</location>
    </subcellularLocation>
</comment>
<comment type="similarity">
    <text evidence="1">Belongs to the thymidylate synthase family. Bacterial-type ThyA subfamily.</text>
</comment>
<accession>Q6G2S8</accession>